<accession>Q88VQ3</accession>
<accession>F9UPU9</accession>
<reference key="1">
    <citation type="journal article" date="2003" name="Proc. Natl. Acad. Sci. U.S.A.">
        <title>Complete genome sequence of Lactobacillus plantarum WCFS1.</title>
        <authorList>
            <person name="Kleerebezem M."/>
            <person name="Boekhorst J."/>
            <person name="van Kranenburg R."/>
            <person name="Molenaar D."/>
            <person name="Kuipers O.P."/>
            <person name="Leer R."/>
            <person name="Tarchini R."/>
            <person name="Peters S.A."/>
            <person name="Sandbrink H.M."/>
            <person name="Fiers M.W.E.J."/>
            <person name="Stiekema W."/>
            <person name="Klein Lankhorst R.M."/>
            <person name="Bron P.A."/>
            <person name="Hoffer S.M."/>
            <person name="Nierop Groot M.N."/>
            <person name="Kerkhoven R."/>
            <person name="De Vries M."/>
            <person name="Ursing B."/>
            <person name="De Vos W.M."/>
            <person name="Siezen R.J."/>
        </authorList>
    </citation>
    <scope>NUCLEOTIDE SEQUENCE [LARGE SCALE GENOMIC DNA]</scope>
    <source>
        <strain>ATCC BAA-793 / NCIMB 8826 / WCFS1</strain>
    </source>
</reference>
<reference key="2">
    <citation type="journal article" date="2012" name="J. Bacteriol.">
        <title>Complete resequencing and reannotation of the Lactobacillus plantarum WCFS1 genome.</title>
        <authorList>
            <person name="Siezen R.J."/>
            <person name="Francke C."/>
            <person name="Renckens B."/>
            <person name="Boekhorst J."/>
            <person name="Wels M."/>
            <person name="Kleerebezem M."/>
            <person name="van Hijum S.A."/>
        </authorList>
    </citation>
    <scope>NUCLEOTIDE SEQUENCE [LARGE SCALE GENOMIC DNA]</scope>
    <scope>GENOME REANNOTATION</scope>
    <source>
        <strain>ATCC BAA-793 / NCIMB 8826 / WCFS1</strain>
    </source>
</reference>
<sequence>MRVIVQRSQQAQVSIDGKVRGTIDHGFVLLVGFQDGDGQAELDYIAHKILNLRVFSDADGKMNLNIQQVGGAILSISQFTLYAETRHGNRPSFTAAGNPELASKLYDTFNQQLAASGVTVATGEFGADMQVSLVNDGPVTICYDTDQR</sequence>
<comment type="function">
    <text evidence="1">An aminoacyl-tRNA editing enzyme that deacylates mischarged D-aminoacyl-tRNAs. Also deacylates mischarged glycyl-tRNA(Ala), protecting cells against glycine mischarging by AlaRS. Acts via tRNA-based rather than protein-based catalysis; rejects L-amino acids rather than detecting D-amino acids in the active site. By recycling D-aminoacyl-tRNA to D-amino acids and free tRNA molecules, this enzyme counteracts the toxicity associated with the formation of D-aminoacyl-tRNA entities in vivo and helps enforce protein L-homochirality.</text>
</comment>
<comment type="catalytic activity">
    <reaction evidence="1">
        <text>glycyl-tRNA(Ala) + H2O = tRNA(Ala) + glycine + H(+)</text>
        <dbReference type="Rhea" id="RHEA:53744"/>
        <dbReference type="Rhea" id="RHEA-COMP:9657"/>
        <dbReference type="Rhea" id="RHEA-COMP:13640"/>
        <dbReference type="ChEBI" id="CHEBI:15377"/>
        <dbReference type="ChEBI" id="CHEBI:15378"/>
        <dbReference type="ChEBI" id="CHEBI:57305"/>
        <dbReference type="ChEBI" id="CHEBI:78442"/>
        <dbReference type="ChEBI" id="CHEBI:78522"/>
        <dbReference type="EC" id="3.1.1.96"/>
    </reaction>
</comment>
<comment type="catalytic activity">
    <reaction evidence="1">
        <text>a D-aminoacyl-tRNA + H2O = a tRNA + a D-alpha-amino acid + H(+)</text>
        <dbReference type="Rhea" id="RHEA:13953"/>
        <dbReference type="Rhea" id="RHEA-COMP:10123"/>
        <dbReference type="Rhea" id="RHEA-COMP:10124"/>
        <dbReference type="ChEBI" id="CHEBI:15377"/>
        <dbReference type="ChEBI" id="CHEBI:15378"/>
        <dbReference type="ChEBI" id="CHEBI:59871"/>
        <dbReference type="ChEBI" id="CHEBI:78442"/>
        <dbReference type="ChEBI" id="CHEBI:79333"/>
        <dbReference type="EC" id="3.1.1.96"/>
    </reaction>
</comment>
<comment type="subunit">
    <text evidence="1">Homodimer.</text>
</comment>
<comment type="subcellular location">
    <subcellularLocation>
        <location evidence="1">Cytoplasm</location>
    </subcellularLocation>
</comment>
<comment type="domain">
    <text evidence="1">A Gly-cisPro motif from one monomer fits into the active site of the other monomer to allow specific chiral rejection of L-amino acids.</text>
</comment>
<comment type="similarity">
    <text evidence="1">Belongs to the DTD family.</text>
</comment>
<name>DTD_LACPL</name>
<evidence type="ECO:0000255" key="1">
    <source>
        <dbReference type="HAMAP-Rule" id="MF_00518"/>
    </source>
</evidence>
<proteinExistence type="inferred from homology"/>
<protein>
    <recommendedName>
        <fullName evidence="1">D-aminoacyl-tRNA deacylase</fullName>
        <shortName evidence="1">DTD</shortName>
        <ecNumber evidence="1">3.1.1.96</ecNumber>
    </recommendedName>
    <alternativeName>
        <fullName evidence="1">Gly-tRNA(Ala) deacylase</fullName>
    </alternativeName>
</protein>
<gene>
    <name evidence="1" type="primary">dtd</name>
    <name type="ordered locus">lp_1986</name>
</gene>
<organism>
    <name type="scientific">Lactiplantibacillus plantarum (strain ATCC BAA-793 / NCIMB 8826 / WCFS1)</name>
    <name type="common">Lactobacillus plantarum</name>
    <dbReference type="NCBI Taxonomy" id="220668"/>
    <lineage>
        <taxon>Bacteria</taxon>
        <taxon>Bacillati</taxon>
        <taxon>Bacillota</taxon>
        <taxon>Bacilli</taxon>
        <taxon>Lactobacillales</taxon>
        <taxon>Lactobacillaceae</taxon>
        <taxon>Lactiplantibacillus</taxon>
    </lineage>
</organism>
<keyword id="KW-0963">Cytoplasm</keyword>
<keyword id="KW-0378">Hydrolase</keyword>
<keyword id="KW-1185">Reference proteome</keyword>
<keyword id="KW-0694">RNA-binding</keyword>
<keyword id="KW-0820">tRNA-binding</keyword>
<feature type="chain" id="PRO_0000164551" description="D-aminoacyl-tRNA deacylase">
    <location>
        <begin position="1"/>
        <end position="148"/>
    </location>
</feature>
<feature type="short sequence motif" description="Gly-cisPro motif, important for rejection of L-amino acids" evidence="1">
    <location>
        <begin position="137"/>
        <end position="138"/>
    </location>
</feature>
<dbReference type="EC" id="3.1.1.96" evidence="1"/>
<dbReference type="EMBL" id="AL935263">
    <property type="protein sequence ID" value="CCC79238.1"/>
    <property type="molecule type" value="Genomic_DNA"/>
</dbReference>
<dbReference type="RefSeq" id="WP_003640695.1">
    <property type="nucleotide sequence ID" value="NC_004567.2"/>
</dbReference>
<dbReference type="RefSeq" id="YP_004889752.1">
    <property type="nucleotide sequence ID" value="NC_004567.2"/>
</dbReference>
<dbReference type="SMR" id="Q88VQ3"/>
<dbReference type="STRING" id="220668.lp_1986"/>
<dbReference type="EnsemblBacteria" id="CCC79238">
    <property type="protein sequence ID" value="CCC79238"/>
    <property type="gene ID" value="lp_1986"/>
</dbReference>
<dbReference type="GeneID" id="77218333"/>
<dbReference type="KEGG" id="lpl:lp_1986"/>
<dbReference type="PATRIC" id="fig|220668.9.peg.1678"/>
<dbReference type="eggNOG" id="COG1490">
    <property type="taxonomic scope" value="Bacteria"/>
</dbReference>
<dbReference type="HOGENOM" id="CLU_076901_1_0_9"/>
<dbReference type="OrthoDB" id="9801395at2"/>
<dbReference type="PhylomeDB" id="Q88VQ3"/>
<dbReference type="Proteomes" id="UP000000432">
    <property type="component" value="Chromosome"/>
</dbReference>
<dbReference type="GO" id="GO:0005737">
    <property type="term" value="C:cytoplasm"/>
    <property type="evidence" value="ECO:0007669"/>
    <property type="project" value="UniProtKB-SubCell"/>
</dbReference>
<dbReference type="GO" id="GO:0051500">
    <property type="term" value="F:D-tyrosyl-tRNA(Tyr) deacylase activity"/>
    <property type="evidence" value="ECO:0007669"/>
    <property type="project" value="TreeGrafter"/>
</dbReference>
<dbReference type="GO" id="GO:0106026">
    <property type="term" value="F:Gly-tRNA(Ala) deacylase activity"/>
    <property type="evidence" value="ECO:0007669"/>
    <property type="project" value="UniProtKB-UniRule"/>
</dbReference>
<dbReference type="GO" id="GO:0043908">
    <property type="term" value="F:Ser(Gly)-tRNA(Ala) hydrolase activity"/>
    <property type="evidence" value="ECO:0007669"/>
    <property type="project" value="UniProtKB-UniRule"/>
</dbReference>
<dbReference type="GO" id="GO:0000049">
    <property type="term" value="F:tRNA binding"/>
    <property type="evidence" value="ECO:0007669"/>
    <property type="project" value="UniProtKB-UniRule"/>
</dbReference>
<dbReference type="GO" id="GO:0019478">
    <property type="term" value="P:D-amino acid catabolic process"/>
    <property type="evidence" value="ECO:0007669"/>
    <property type="project" value="UniProtKB-UniRule"/>
</dbReference>
<dbReference type="CDD" id="cd00563">
    <property type="entry name" value="Dtyr_deacylase"/>
    <property type="match status" value="1"/>
</dbReference>
<dbReference type="FunFam" id="3.50.80.10:FF:000001">
    <property type="entry name" value="D-aminoacyl-tRNA deacylase"/>
    <property type="match status" value="1"/>
</dbReference>
<dbReference type="Gene3D" id="3.50.80.10">
    <property type="entry name" value="D-tyrosyl-tRNA(Tyr) deacylase"/>
    <property type="match status" value="1"/>
</dbReference>
<dbReference type="HAMAP" id="MF_00518">
    <property type="entry name" value="Deacylase_Dtd"/>
    <property type="match status" value="1"/>
</dbReference>
<dbReference type="InterPro" id="IPR003732">
    <property type="entry name" value="Daa-tRNA_deacyls_DTD"/>
</dbReference>
<dbReference type="InterPro" id="IPR023509">
    <property type="entry name" value="DTD-like_sf"/>
</dbReference>
<dbReference type="NCBIfam" id="TIGR00256">
    <property type="entry name" value="D-aminoacyl-tRNA deacylase"/>
    <property type="match status" value="1"/>
</dbReference>
<dbReference type="PANTHER" id="PTHR10472:SF5">
    <property type="entry name" value="D-AMINOACYL-TRNA DEACYLASE 1"/>
    <property type="match status" value="1"/>
</dbReference>
<dbReference type="PANTHER" id="PTHR10472">
    <property type="entry name" value="D-TYROSYL-TRNA TYR DEACYLASE"/>
    <property type="match status" value="1"/>
</dbReference>
<dbReference type="Pfam" id="PF02580">
    <property type="entry name" value="Tyr_Deacylase"/>
    <property type="match status" value="1"/>
</dbReference>
<dbReference type="SUPFAM" id="SSF69500">
    <property type="entry name" value="DTD-like"/>
    <property type="match status" value="1"/>
</dbReference>